<name>SYC_CLOK5</name>
<keyword id="KW-0030">Aminoacyl-tRNA synthetase</keyword>
<keyword id="KW-0067">ATP-binding</keyword>
<keyword id="KW-0963">Cytoplasm</keyword>
<keyword id="KW-0436">Ligase</keyword>
<keyword id="KW-0479">Metal-binding</keyword>
<keyword id="KW-0547">Nucleotide-binding</keyword>
<keyword id="KW-0648">Protein biosynthesis</keyword>
<keyword id="KW-1185">Reference proteome</keyword>
<keyword id="KW-0862">Zinc</keyword>
<reference key="1">
    <citation type="journal article" date="2008" name="Proc. Natl. Acad. Sci. U.S.A.">
        <title>The genome of Clostridium kluyveri, a strict anaerobe with unique metabolic features.</title>
        <authorList>
            <person name="Seedorf H."/>
            <person name="Fricke W.F."/>
            <person name="Veith B."/>
            <person name="Brueggemann H."/>
            <person name="Liesegang H."/>
            <person name="Strittmatter A."/>
            <person name="Miethke M."/>
            <person name="Buckel W."/>
            <person name="Hinderberger J."/>
            <person name="Li F."/>
            <person name="Hagemeier C."/>
            <person name="Thauer R.K."/>
            <person name="Gottschalk G."/>
        </authorList>
    </citation>
    <scope>NUCLEOTIDE SEQUENCE [LARGE SCALE GENOMIC DNA]</scope>
    <source>
        <strain>ATCC 8527 / DSM 555 / NBRC 12016 / NCIMB 10680 / K1</strain>
    </source>
</reference>
<organism>
    <name type="scientific">Clostridium kluyveri (strain ATCC 8527 / DSM 555 / NBRC 12016 / NCIMB 10680 / K1)</name>
    <dbReference type="NCBI Taxonomy" id="431943"/>
    <lineage>
        <taxon>Bacteria</taxon>
        <taxon>Bacillati</taxon>
        <taxon>Bacillota</taxon>
        <taxon>Clostridia</taxon>
        <taxon>Eubacteriales</taxon>
        <taxon>Clostridiaceae</taxon>
        <taxon>Clostridium</taxon>
    </lineage>
</organism>
<gene>
    <name evidence="1" type="primary">cysS</name>
    <name type="ordered locus">CKL_0201</name>
</gene>
<accession>A5N4M6</accession>
<sequence length="465" mass="54017">MRIFNTMTRRKEEFVPLIPGEIKMYVCGPTVYNFFHIGNARTFVVFDTVRRYFEYKGYKVNFVQNFTDIDDKMIKKANDENITVQQLGDRFIDEYYRDADALNIKRATVNPRATLYISKIIEFIQDLIDKGYAYSVDGDVYFNAKKFNNYGKLSGQNIEQLQSGARIDIDERKKNPMDFAVWKSEKKGEPSWESPWGMGRPGWHIECSCMAYNILGETIDIHAGGSDLKFPHHENEIAQSEGRTGKVFAKYWMHSAFVNINNQKMSKSLNNFFTTREILDKYEPDVIRLFMLSGHYRTPINFSIELLDSTKSALDRICNSIINLEELSSKVKNDGILDSEIKYKEHLNSYKQRYIEKMDDDFNTADAISVIFDLIRDINTNIDENSSMEIIKYSLALIRELGSPLGILQKSKRGSIETEVELLIEKRQKARKDKNWALADKIRDDLKDKGIILEDTSDGVRWKRV</sequence>
<evidence type="ECO:0000255" key="1">
    <source>
        <dbReference type="HAMAP-Rule" id="MF_00041"/>
    </source>
</evidence>
<proteinExistence type="inferred from homology"/>
<dbReference type="EC" id="6.1.1.16" evidence="1"/>
<dbReference type="EMBL" id="CP000673">
    <property type="protein sequence ID" value="EDK32257.1"/>
    <property type="molecule type" value="Genomic_DNA"/>
</dbReference>
<dbReference type="RefSeq" id="WP_011988783.1">
    <property type="nucleotide sequence ID" value="NC_009706.1"/>
</dbReference>
<dbReference type="SMR" id="A5N4M6"/>
<dbReference type="STRING" id="431943.CKL_0201"/>
<dbReference type="KEGG" id="ckl:CKL_0201"/>
<dbReference type="eggNOG" id="COG0215">
    <property type="taxonomic scope" value="Bacteria"/>
</dbReference>
<dbReference type="HOGENOM" id="CLU_013528_0_1_9"/>
<dbReference type="Proteomes" id="UP000002411">
    <property type="component" value="Chromosome"/>
</dbReference>
<dbReference type="GO" id="GO:0005829">
    <property type="term" value="C:cytosol"/>
    <property type="evidence" value="ECO:0007669"/>
    <property type="project" value="TreeGrafter"/>
</dbReference>
<dbReference type="GO" id="GO:0005524">
    <property type="term" value="F:ATP binding"/>
    <property type="evidence" value="ECO:0007669"/>
    <property type="project" value="UniProtKB-UniRule"/>
</dbReference>
<dbReference type="GO" id="GO:0004817">
    <property type="term" value="F:cysteine-tRNA ligase activity"/>
    <property type="evidence" value="ECO:0007669"/>
    <property type="project" value="UniProtKB-UniRule"/>
</dbReference>
<dbReference type="GO" id="GO:0008270">
    <property type="term" value="F:zinc ion binding"/>
    <property type="evidence" value="ECO:0007669"/>
    <property type="project" value="UniProtKB-UniRule"/>
</dbReference>
<dbReference type="GO" id="GO:0006423">
    <property type="term" value="P:cysteinyl-tRNA aminoacylation"/>
    <property type="evidence" value="ECO:0007669"/>
    <property type="project" value="UniProtKB-UniRule"/>
</dbReference>
<dbReference type="CDD" id="cd00672">
    <property type="entry name" value="CysRS_core"/>
    <property type="match status" value="1"/>
</dbReference>
<dbReference type="FunFam" id="3.40.50.620:FF:000009">
    <property type="entry name" value="Cysteine--tRNA ligase"/>
    <property type="match status" value="1"/>
</dbReference>
<dbReference type="Gene3D" id="1.20.120.1910">
    <property type="entry name" value="Cysteine-tRNA ligase, C-terminal anti-codon recognition domain"/>
    <property type="match status" value="1"/>
</dbReference>
<dbReference type="Gene3D" id="3.40.50.620">
    <property type="entry name" value="HUPs"/>
    <property type="match status" value="1"/>
</dbReference>
<dbReference type="HAMAP" id="MF_00041">
    <property type="entry name" value="Cys_tRNA_synth"/>
    <property type="match status" value="1"/>
</dbReference>
<dbReference type="InterPro" id="IPR015803">
    <property type="entry name" value="Cys-tRNA-ligase"/>
</dbReference>
<dbReference type="InterPro" id="IPR015273">
    <property type="entry name" value="Cys-tRNA-synt_Ia_DALR"/>
</dbReference>
<dbReference type="InterPro" id="IPR024909">
    <property type="entry name" value="Cys-tRNA/MSH_ligase"/>
</dbReference>
<dbReference type="InterPro" id="IPR056411">
    <property type="entry name" value="CysS_C"/>
</dbReference>
<dbReference type="InterPro" id="IPR014729">
    <property type="entry name" value="Rossmann-like_a/b/a_fold"/>
</dbReference>
<dbReference type="InterPro" id="IPR032678">
    <property type="entry name" value="tRNA-synt_1_cat_dom"/>
</dbReference>
<dbReference type="InterPro" id="IPR009080">
    <property type="entry name" value="tRNAsynth_Ia_anticodon-bd"/>
</dbReference>
<dbReference type="NCBIfam" id="TIGR00435">
    <property type="entry name" value="cysS"/>
    <property type="match status" value="1"/>
</dbReference>
<dbReference type="PANTHER" id="PTHR10890:SF3">
    <property type="entry name" value="CYSTEINE--TRNA LIGASE, CYTOPLASMIC"/>
    <property type="match status" value="1"/>
</dbReference>
<dbReference type="PANTHER" id="PTHR10890">
    <property type="entry name" value="CYSTEINYL-TRNA SYNTHETASE"/>
    <property type="match status" value="1"/>
</dbReference>
<dbReference type="Pfam" id="PF23493">
    <property type="entry name" value="CysS_C"/>
    <property type="match status" value="1"/>
</dbReference>
<dbReference type="Pfam" id="PF09190">
    <property type="entry name" value="DALR_2"/>
    <property type="match status" value="1"/>
</dbReference>
<dbReference type="Pfam" id="PF01406">
    <property type="entry name" value="tRNA-synt_1e"/>
    <property type="match status" value="1"/>
</dbReference>
<dbReference type="PRINTS" id="PR00983">
    <property type="entry name" value="TRNASYNTHCYS"/>
</dbReference>
<dbReference type="SMART" id="SM00840">
    <property type="entry name" value="DALR_2"/>
    <property type="match status" value="1"/>
</dbReference>
<dbReference type="SUPFAM" id="SSF47323">
    <property type="entry name" value="Anticodon-binding domain of a subclass of class I aminoacyl-tRNA synthetases"/>
    <property type="match status" value="1"/>
</dbReference>
<dbReference type="SUPFAM" id="SSF52374">
    <property type="entry name" value="Nucleotidylyl transferase"/>
    <property type="match status" value="1"/>
</dbReference>
<feature type="chain" id="PRO_0000332804" description="Cysteine--tRNA ligase">
    <location>
        <begin position="1"/>
        <end position="465"/>
    </location>
</feature>
<feature type="short sequence motif" description="'HIGH' region">
    <location>
        <begin position="29"/>
        <end position="39"/>
    </location>
</feature>
<feature type="short sequence motif" description="'KMSKS' region">
    <location>
        <begin position="264"/>
        <end position="268"/>
    </location>
</feature>
<feature type="binding site" evidence="1">
    <location>
        <position position="27"/>
    </location>
    <ligand>
        <name>Zn(2+)</name>
        <dbReference type="ChEBI" id="CHEBI:29105"/>
    </ligand>
</feature>
<feature type="binding site" evidence="1">
    <location>
        <position position="207"/>
    </location>
    <ligand>
        <name>Zn(2+)</name>
        <dbReference type="ChEBI" id="CHEBI:29105"/>
    </ligand>
</feature>
<feature type="binding site" evidence="1">
    <location>
        <position position="232"/>
    </location>
    <ligand>
        <name>Zn(2+)</name>
        <dbReference type="ChEBI" id="CHEBI:29105"/>
    </ligand>
</feature>
<feature type="binding site" evidence="1">
    <location>
        <position position="236"/>
    </location>
    <ligand>
        <name>Zn(2+)</name>
        <dbReference type="ChEBI" id="CHEBI:29105"/>
    </ligand>
</feature>
<feature type="binding site" evidence="1">
    <location>
        <position position="267"/>
    </location>
    <ligand>
        <name>ATP</name>
        <dbReference type="ChEBI" id="CHEBI:30616"/>
    </ligand>
</feature>
<comment type="catalytic activity">
    <reaction evidence="1">
        <text>tRNA(Cys) + L-cysteine + ATP = L-cysteinyl-tRNA(Cys) + AMP + diphosphate</text>
        <dbReference type="Rhea" id="RHEA:17773"/>
        <dbReference type="Rhea" id="RHEA-COMP:9661"/>
        <dbReference type="Rhea" id="RHEA-COMP:9679"/>
        <dbReference type="ChEBI" id="CHEBI:30616"/>
        <dbReference type="ChEBI" id="CHEBI:33019"/>
        <dbReference type="ChEBI" id="CHEBI:35235"/>
        <dbReference type="ChEBI" id="CHEBI:78442"/>
        <dbReference type="ChEBI" id="CHEBI:78517"/>
        <dbReference type="ChEBI" id="CHEBI:456215"/>
        <dbReference type="EC" id="6.1.1.16"/>
    </reaction>
</comment>
<comment type="cofactor">
    <cofactor evidence="1">
        <name>Zn(2+)</name>
        <dbReference type="ChEBI" id="CHEBI:29105"/>
    </cofactor>
    <text evidence="1">Binds 1 zinc ion per subunit.</text>
</comment>
<comment type="subunit">
    <text evidence="1">Monomer.</text>
</comment>
<comment type="subcellular location">
    <subcellularLocation>
        <location evidence="1">Cytoplasm</location>
    </subcellularLocation>
</comment>
<comment type="similarity">
    <text evidence="1">Belongs to the class-I aminoacyl-tRNA synthetase family.</text>
</comment>
<protein>
    <recommendedName>
        <fullName evidence="1">Cysteine--tRNA ligase</fullName>
        <ecNumber evidence="1">6.1.1.16</ecNumber>
    </recommendedName>
    <alternativeName>
        <fullName evidence="1">Cysteinyl-tRNA synthetase</fullName>
        <shortName evidence="1">CysRS</shortName>
    </alternativeName>
</protein>